<comment type="function">
    <text evidence="1">Component of the ESCRT-I complex (endosomal sorting complex required for transport I), a regulator of vesicular trafficking process. Required for the sorting of endocytic ubiquitinated cargos into multivesicular bodies (MVBs) (By similarity).</text>
</comment>
<comment type="subunit">
    <text evidence="4">Component of the endosomal sorting required for transport complex I (ESCRT-I), composed of ELC, VPS28 and VPS37. Interacts with ELC.</text>
</comment>
<comment type="interaction">
    <interactant intactId="EBI-3865264">
        <id>Q9SCP9</id>
    </interactant>
    <interactant intactId="EBI-3865248">
        <id>Q9LHG8</id>
        <label>ELC</label>
    </interactant>
    <organismsDiffer>false</organismsDiffer>
    <experiments>4</experiments>
</comment>
<comment type="interaction">
    <interactant intactId="EBI-3865264">
        <id>Q9SCP9</id>
    </interactant>
    <interactant intactId="EBI-3865255">
        <id>Q9FFY6</id>
        <label>ELCL</label>
    </interactant>
    <organismsDiffer>false</organismsDiffer>
    <experiments>4</experiments>
</comment>
<comment type="interaction">
    <interactant intactId="EBI-3865264">
        <id>Q9SCP9</id>
    </interactant>
    <interactant intactId="EBI-3865345">
        <id>Q9SKI2</id>
        <label>VPS2.1</label>
    </interactant>
    <organismsDiffer>false</organismsDiffer>
    <experiments>3</experiments>
</comment>
<comment type="interaction">
    <interactant intactId="EBI-3865264">
        <id>Q9SCP9</id>
    </interactant>
    <interactant intactId="EBI-3865310">
        <id>O65421</id>
        <label>VPS28-1</label>
    </interactant>
    <organismsDiffer>false</organismsDiffer>
    <experiments>3</experiments>
</comment>
<comment type="interaction">
    <interactant intactId="EBI-3865264">
        <id>Q9SCP9</id>
    </interactant>
    <interactant intactId="EBI-3865335">
        <id>Q9S9T7</id>
        <label>VPS28-2</label>
    </interactant>
    <organismsDiffer>false</organismsDiffer>
    <experiments>3</experiments>
</comment>
<comment type="subcellular location">
    <subcellularLocation>
        <location evidence="1">Endosome</location>
    </subcellularLocation>
</comment>
<comment type="similarity">
    <text evidence="5">Belongs to the VPS37 family.</text>
</comment>
<accession>Q9SCP9</accession>
<gene>
    <name type="primary">VPS37-1</name>
    <name type="ordered locus">At3g53120</name>
    <name type="ORF">T4D2.50</name>
</gene>
<proteinExistence type="evidence at protein level"/>
<reference key="1">
    <citation type="journal article" date="2000" name="Nature">
        <title>Sequence and analysis of chromosome 3 of the plant Arabidopsis thaliana.</title>
        <authorList>
            <person name="Salanoubat M."/>
            <person name="Lemcke K."/>
            <person name="Rieger M."/>
            <person name="Ansorge W."/>
            <person name="Unseld M."/>
            <person name="Fartmann B."/>
            <person name="Valle G."/>
            <person name="Bloecker H."/>
            <person name="Perez-Alonso M."/>
            <person name="Obermaier B."/>
            <person name="Delseny M."/>
            <person name="Boutry M."/>
            <person name="Grivell L.A."/>
            <person name="Mache R."/>
            <person name="Puigdomenech P."/>
            <person name="De Simone V."/>
            <person name="Choisne N."/>
            <person name="Artiguenave F."/>
            <person name="Robert C."/>
            <person name="Brottier P."/>
            <person name="Wincker P."/>
            <person name="Cattolico L."/>
            <person name="Weissenbach J."/>
            <person name="Saurin W."/>
            <person name="Quetier F."/>
            <person name="Schaefer M."/>
            <person name="Mueller-Auer S."/>
            <person name="Gabel C."/>
            <person name="Fuchs M."/>
            <person name="Benes V."/>
            <person name="Wurmbach E."/>
            <person name="Drzonek H."/>
            <person name="Erfle H."/>
            <person name="Jordan N."/>
            <person name="Bangert S."/>
            <person name="Wiedelmann R."/>
            <person name="Kranz H."/>
            <person name="Voss H."/>
            <person name="Holland R."/>
            <person name="Brandt P."/>
            <person name="Nyakatura G."/>
            <person name="Vezzi A."/>
            <person name="D'Angelo M."/>
            <person name="Pallavicini A."/>
            <person name="Toppo S."/>
            <person name="Simionati B."/>
            <person name="Conrad A."/>
            <person name="Hornischer K."/>
            <person name="Kauer G."/>
            <person name="Loehnert T.-H."/>
            <person name="Nordsiek G."/>
            <person name="Reichelt J."/>
            <person name="Scharfe M."/>
            <person name="Schoen O."/>
            <person name="Bargues M."/>
            <person name="Terol J."/>
            <person name="Climent J."/>
            <person name="Navarro P."/>
            <person name="Collado C."/>
            <person name="Perez-Perez A."/>
            <person name="Ottenwaelder B."/>
            <person name="Duchemin D."/>
            <person name="Cooke R."/>
            <person name="Laudie M."/>
            <person name="Berger-Llauro C."/>
            <person name="Purnelle B."/>
            <person name="Masuy D."/>
            <person name="de Haan M."/>
            <person name="Maarse A.C."/>
            <person name="Alcaraz J.-P."/>
            <person name="Cottet A."/>
            <person name="Casacuberta E."/>
            <person name="Monfort A."/>
            <person name="Argiriou A."/>
            <person name="Flores M."/>
            <person name="Liguori R."/>
            <person name="Vitale D."/>
            <person name="Mannhaupt G."/>
            <person name="Haase D."/>
            <person name="Schoof H."/>
            <person name="Rudd S."/>
            <person name="Zaccaria P."/>
            <person name="Mewes H.-W."/>
            <person name="Mayer K.F.X."/>
            <person name="Kaul S."/>
            <person name="Town C.D."/>
            <person name="Koo H.L."/>
            <person name="Tallon L.J."/>
            <person name="Jenkins J."/>
            <person name="Rooney T."/>
            <person name="Rizzo M."/>
            <person name="Walts A."/>
            <person name="Utterback T."/>
            <person name="Fujii C.Y."/>
            <person name="Shea T.P."/>
            <person name="Creasy T.H."/>
            <person name="Haas B."/>
            <person name="Maiti R."/>
            <person name="Wu D."/>
            <person name="Peterson J."/>
            <person name="Van Aken S."/>
            <person name="Pai G."/>
            <person name="Militscher J."/>
            <person name="Sellers P."/>
            <person name="Gill J.E."/>
            <person name="Feldblyum T.V."/>
            <person name="Preuss D."/>
            <person name="Lin X."/>
            <person name="Nierman W.C."/>
            <person name="Salzberg S.L."/>
            <person name="White O."/>
            <person name="Venter J.C."/>
            <person name="Fraser C.M."/>
            <person name="Kaneko T."/>
            <person name="Nakamura Y."/>
            <person name="Sato S."/>
            <person name="Kato T."/>
            <person name="Asamizu E."/>
            <person name="Sasamoto S."/>
            <person name="Kimura T."/>
            <person name="Idesawa K."/>
            <person name="Kawashima K."/>
            <person name="Kishida Y."/>
            <person name="Kiyokawa C."/>
            <person name="Kohara M."/>
            <person name="Matsumoto M."/>
            <person name="Matsuno A."/>
            <person name="Muraki A."/>
            <person name="Nakayama S."/>
            <person name="Nakazaki N."/>
            <person name="Shinpo S."/>
            <person name="Takeuchi C."/>
            <person name="Wada T."/>
            <person name="Watanabe A."/>
            <person name="Yamada M."/>
            <person name="Yasuda M."/>
            <person name="Tabata S."/>
        </authorList>
    </citation>
    <scope>NUCLEOTIDE SEQUENCE [LARGE SCALE GENOMIC DNA]</scope>
    <source>
        <strain>cv. Columbia</strain>
    </source>
</reference>
<reference key="2">
    <citation type="journal article" date="2017" name="Plant J.">
        <title>Araport11: a complete reannotation of the Arabidopsis thaliana reference genome.</title>
        <authorList>
            <person name="Cheng C.Y."/>
            <person name="Krishnakumar V."/>
            <person name="Chan A.P."/>
            <person name="Thibaud-Nissen F."/>
            <person name="Schobel S."/>
            <person name="Town C.D."/>
        </authorList>
    </citation>
    <scope>GENOME REANNOTATION</scope>
    <source>
        <strain>cv. Columbia</strain>
    </source>
</reference>
<reference key="3">
    <citation type="journal article" date="2004" name="Genome Res.">
        <title>Whole genome sequence comparisons and 'full-length' cDNA sequences: a combined approach to evaluate and improve Arabidopsis genome annotation.</title>
        <authorList>
            <person name="Castelli V."/>
            <person name="Aury J.-M."/>
            <person name="Jaillon O."/>
            <person name="Wincker P."/>
            <person name="Clepet C."/>
            <person name="Menard M."/>
            <person name="Cruaud C."/>
            <person name="Quetier F."/>
            <person name="Scarpelli C."/>
            <person name="Schaechter V."/>
            <person name="Temple G."/>
            <person name="Caboche M."/>
            <person name="Weissenbach J."/>
            <person name="Salanoubat M."/>
        </authorList>
    </citation>
    <scope>NUCLEOTIDE SEQUENCE [LARGE SCALE MRNA]</scope>
    <source>
        <strain>cv. Columbia</strain>
    </source>
</reference>
<reference key="4">
    <citation type="journal article" date="2006" name="Development">
        <title>The Arabidopsis elch mutant reveals functions of an ESCRT component in cytokinesis.</title>
        <authorList>
            <person name="Spitzer C."/>
            <person name="Schellmann S."/>
            <person name="Sabovljevic A."/>
            <person name="Shahriari M."/>
            <person name="Keshavaiah C."/>
            <person name="Bechtold N."/>
            <person name="Herzog M."/>
            <person name="Mueller S."/>
            <person name="Hanisch F.-G."/>
            <person name="Huelskamp M."/>
        </authorList>
    </citation>
    <scope>IDENTIFICATION</scope>
    <scope>NOMENCLATURE</scope>
    <scope>INTERACTION WITH ELC</scope>
</reference>
<reference key="5">
    <citation type="journal article" date="2006" name="Trends Plant Sci.">
        <title>Exploring the ESCRTing machinery in eukaryotes.</title>
        <authorList>
            <person name="Winter V."/>
            <person name="Hauser M.-T."/>
        </authorList>
    </citation>
    <scope>IDENTIFICATION</scope>
</reference>
<evidence type="ECO:0000250" key="1"/>
<evidence type="ECO:0000255" key="2">
    <source>
        <dbReference type="PROSITE-ProRule" id="PRU00646"/>
    </source>
</evidence>
<evidence type="ECO:0000256" key="3">
    <source>
        <dbReference type="SAM" id="MobiDB-lite"/>
    </source>
</evidence>
<evidence type="ECO:0000269" key="4">
    <source>
    </source>
</evidence>
<evidence type="ECO:0000305" key="5"/>
<organism>
    <name type="scientific">Arabidopsis thaliana</name>
    <name type="common">Mouse-ear cress</name>
    <dbReference type="NCBI Taxonomy" id="3702"/>
    <lineage>
        <taxon>Eukaryota</taxon>
        <taxon>Viridiplantae</taxon>
        <taxon>Streptophyta</taxon>
        <taxon>Embryophyta</taxon>
        <taxon>Tracheophyta</taxon>
        <taxon>Spermatophyta</taxon>
        <taxon>Magnoliopsida</taxon>
        <taxon>eudicotyledons</taxon>
        <taxon>Gunneridae</taxon>
        <taxon>Pentapetalae</taxon>
        <taxon>rosids</taxon>
        <taxon>malvids</taxon>
        <taxon>Brassicales</taxon>
        <taxon>Brassicaceae</taxon>
        <taxon>Camelineae</taxon>
        <taxon>Arabidopsis</taxon>
    </lineage>
</organism>
<feature type="chain" id="PRO_0000368189" description="Vacuolar protein-sorting-associated protein 37 homolog 1">
    <location>
        <begin position="1"/>
        <end position="217"/>
    </location>
</feature>
<feature type="domain" description="VPS37 C-terminal" evidence="2">
    <location>
        <begin position="137"/>
        <end position="217"/>
    </location>
</feature>
<feature type="region of interest" description="Disordered" evidence="3">
    <location>
        <begin position="1"/>
        <end position="49"/>
    </location>
</feature>
<feature type="compositionally biased region" description="Polar residues" evidence="3">
    <location>
        <begin position="8"/>
        <end position="20"/>
    </location>
</feature>
<feature type="compositionally biased region" description="Low complexity" evidence="3">
    <location>
        <begin position="21"/>
        <end position="47"/>
    </location>
</feature>
<name>VP371_ARATH</name>
<protein>
    <recommendedName>
        <fullName>Vacuolar protein-sorting-associated protein 37 homolog 1</fullName>
        <shortName>AtVPS37-1</shortName>
    </recommendedName>
    <alternativeName>
        <fullName>ESCRT-I complex subunit VPS37 homolog 1</fullName>
    </alternativeName>
</protein>
<keyword id="KW-0967">Endosome</keyword>
<keyword id="KW-0653">Protein transport</keyword>
<keyword id="KW-1185">Reference proteome</keyword>
<keyword id="KW-0813">Transport</keyword>
<dbReference type="EMBL" id="AL132958">
    <property type="protein sequence ID" value="CAB64215.1"/>
    <property type="molecule type" value="Genomic_DNA"/>
</dbReference>
<dbReference type="EMBL" id="CP002686">
    <property type="protein sequence ID" value="AEE79039.1"/>
    <property type="molecule type" value="Genomic_DNA"/>
</dbReference>
<dbReference type="EMBL" id="BX822324">
    <property type="status" value="NOT_ANNOTATED_CDS"/>
    <property type="molecule type" value="mRNA"/>
</dbReference>
<dbReference type="PIR" id="T46158">
    <property type="entry name" value="T46158"/>
</dbReference>
<dbReference type="RefSeq" id="NP_190880.1">
    <property type="nucleotide sequence ID" value="NM_115172.4"/>
</dbReference>
<dbReference type="SMR" id="Q9SCP9"/>
<dbReference type="BioGRID" id="9795">
    <property type="interactions" value="8"/>
</dbReference>
<dbReference type="FunCoup" id="Q9SCP9">
    <property type="interactions" value="1943"/>
</dbReference>
<dbReference type="IntAct" id="Q9SCP9">
    <property type="interactions" value="5"/>
</dbReference>
<dbReference type="STRING" id="3702.Q9SCP9"/>
<dbReference type="TCDB" id="3.A.31.1.2">
    <property type="family name" value="the endosomal sorting complexes required for transport iii (escrt-iii) family"/>
</dbReference>
<dbReference type="PaxDb" id="3702-AT3G53120.1"/>
<dbReference type="ProteomicsDB" id="242626"/>
<dbReference type="EnsemblPlants" id="AT3G53120.1">
    <property type="protein sequence ID" value="AT3G53120.1"/>
    <property type="gene ID" value="AT3G53120"/>
</dbReference>
<dbReference type="GeneID" id="824478"/>
<dbReference type="Gramene" id="AT3G53120.1">
    <property type="protein sequence ID" value="AT3G53120.1"/>
    <property type="gene ID" value="AT3G53120"/>
</dbReference>
<dbReference type="KEGG" id="ath:AT3G53120"/>
<dbReference type="Araport" id="AT3G53120"/>
<dbReference type="TAIR" id="AT3G53120">
    <property type="gene designation" value="VPS37-1"/>
</dbReference>
<dbReference type="eggNOG" id="KOG3270">
    <property type="taxonomic scope" value="Eukaryota"/>
</dbReference>
<dbReference type="HOGENOM" id="CLU_036442_0_0_1"/>
<dbReference type="InParanoid" id="Q9SCP9"/>
<dbReference type="OMA" id="YNEVFHS"/>
<dbReference type="PhylomeDB" id="Q9SCP9"/>
<dbReference type="PRO" id="PR:Q9SCP9"/>
<dbReference type="Proteomes" id="UP000006548">
    <property type="component" value="Chromosome 3"/>
</dbReference>
<dbReference type="ExpressionAtlas" id="Q9SCP9">
    <property type="expression patterns" value="baseline and differential"/>
</dbReference>
<dbReference type="GO" id="GO:0000813">
    <property type="term" value="C:ESCRT I complex"/>
    <property type="evidence" value="ECO:0000250"/>
    <property type="project" value="TAIR"/>
</dbReference>
<dbReference type="GO" id="GO:0009056">
    <property type="term" value="P:catabolic process"/>
    <property type="evidence" value="ECO:0007669"/>
    <property type="project" value="UniProtKB-ARBA"/>
</dbReference>
<dbReference type="GO" id="GO:0015031">
    <property type="term" value="P:protein transport"/>
    <property type="evidence" value="ECO:0007669"/>
    <property type="project" value="UniProtKB-KW"/>
</dbReference>
<dbReference type="FunFam" id="1.10.287.660:FF:000005">
    <property type="entry name" value="Vacuolar protein-sorting-associated protein 37 homolog 1"/>
    <property type="match status" value="1"/>
</dbReference>
<dbReference type="Gene3D" id="1.10.287.660">
    <property type="entry name" value="Helix hairpin bin"/>
    <property type="match status" value="1"/>
</dbReference>
<dbReference type="InterPro" id="IPR037202">
    <property type="entry name" value="ESCRT_assembly_dom"/>
</dbReference>
<dbReference type="InterPro" id="IPR029012">
    <property type="entry name" value="Helix_hairpin_bin_sf"/>
</dbReference>
<dbReference type="InterPro" id="IPR009851">
    <property type="entry name" value="Mod_r"/>
</dbReference>
<dbReference type="PANTHER" id="PTHR13678">
    <property type="entry name" value="VACUOLAR PROTEIN SORTING-ASSOCIATED PROTEIN 37"/>
    <property type="match status" value="1"/>
</dbReference>
<dbReference type="PANTHER" id="PTHR13678:SF2">
    <property type="entry name" value="VACUOLAR PROTEIN SORTING-ASSOCIATED PROTEIN 37A"/>
    <property type="match status" value="1"/>
</dbReference>
<dbReference type="Pfam" id="PF07200">
    <property type="entry name" value="Mod_r"/>
    <property type="match status" value="1"/>
</dbReference>
<dbReference type="SUPFAM" id="SSF140111">
    <property type="entry name" value="Endosomal sorting complex assembly domain"/>
    <property type="match status" value="1"/>
</dbReference>
<dbReference type="PROSITE" id="PS51314">
    <property type="entry name" value="VPS37_C"/>
    <property type="match status" value="1"/>
</dbReference>
<sequence>MFNFWGSKDQQQGQSRPQEASSQSPWYSPSLVSSPSSSRPQSSGQISAQVSPGEAAGIIVFLKDKSVDELRKLLSDKDAYQQFLLSLDQVKVQNNIKDELRRETLQLARDNLEKEPQIMELRNQCRIIRTTELATAQEKLNELERQKEEILKFYSPGSLLHKLQEAMNQVDEESEALQEKFLEKEIDTAAFVQKYKKLRTTYHRRALIHLAAKTSNI</sequence>